<organism>
    <name type="scientific">Mycolicibacterium vanbaalenii (strain DSM 7251 / JCM 13017 / BCRC 16820 / KCTC 9966 / NRRL B-24157 / PYR-1)</name>
    <name type="common">Mycobacterium vanbaalenii</name>
    <dbReference type="NCBI Taxonomy" id="350058"/>
    <lineage>
        <taxon>Bacteria</taxon>
        <taxon>Bacillati</taxon>
        <taxon>Actinomycetota</taxon>
        <taxon>Actinomycetes</taxon>
        <taxon>Mycobacteriales</taxon>
        <taxon>Mycobacteriaceae</taxon>
        <taxon>Mycolicibacterium</taxon>
    </lineage>
</organism>
<accession>A1T8G0</accession>
<comment type="function">
    <text evidence="1">Involved in transcription antitermination. Required for transcription of ribosomal RNA (rRNA) genes. Binds specifically to the boxA antiterminator sequence of the ribosomal RNA (rrn) operons.</text>
</comment>
<comment type="similarity">
    <text evidence="1">Belongs to the NusB family.</text>
</comment>
<protein>
    <recommendedName>
        <fullName evidence="1">Transcription antitermination protein NusB</fullName>
    </recommendedName>
    <alternativeName>
        <fullName evidence="1">Antitermination factor NusB</fullName>
    </alternativeName>
</protein>
<name>NUSB_MYCVP</name>
<dbReference type="EMBL" id="CP000511">
    <property type="protein sequence ID" value="ABM13460.1"/>
    <property type="molecule type" value="Genomic_DNA"/>
</dbReference>
<dbReference type="RefSeq" id="WP_011779869.1">
    <property type="nucleotide sequence ID" value="NZ_JACKSD010000055.1"/>
</dbReference>
<dbReference type="SMR" id="A1T8G0"/>
<dbReference type="STRING" id="350058.Mvan_2652"/>
<dbReference type="KEGG" id="mva:Mvan_2652"/>
<dbReference type="eggNOG" id="COG0781">
    <property type="taxonomic scope" value="Bacteria"/>
</dbReference>
<dbReference type="HOGENOM" id="CLU_087843_2_3_11"/>
<dbReference type="Proteomes" id="UP000009159">
    <property type="component" value="Chromosome"/>
</dbReference>
<dbReference type="GO" id="GO:0005829">
    <property type="term" value="C:cytosol"/>
    <property type="evidence" value="ECO:0007669"/>
    <property type="project" value="TreeGrafter"/>
</dbReference>
<dbReference type="GO" id="GO:0003723">
    <property type="term" value="F:RNA binding"/>
    <property type="evidence" value="ECO:0007669"/>
    <property type="project" value="UniProtKB-UniRule"/>
</dbReference>
<dbReference type="GO" id="GO:0006353">
    <property type="term" value="P:DNA-templated transcription termination"/>
    <property type="evidence" value="ECO:0007669"/>
    <property type="project" value="UniProtKB-UniRule"/>
</dbReference>
<dbReference type="GO" id="GO:0031564">
    <property type="term" value="P:transcription antitermination"/>
    <property type="evidence" value="ECO:0007669"/>
    <property type="project" value="UniProtKB-KW"/>
</dbReference>
<dbReference type="CDD" id="cd00619">
    <property type="entry name" value="Terminator_NusB"/>
    <property type="match status" value="1"/>
</dbReference>
<dbReference type="Gene3D" id="1.10.940.10">
    <property type="entry name" value="NusB-like"/>
    <property type="match status" value="1"/>
</dbReference>
<dbReference type="HAMAP" id="MF_00073">
    <property type="entry name" value="NusB"/>
    <property type="match status" value="1"/>
</dbReference>
<dbReference type="InterPro" id="IPR035926">
    <property type="entry name" value="NusB-like_sf"/>
</dbReference>
<dbReference type="InterPro" id="IPR011605">
    <property type="entry name" value="NusB_fam"/>
</dbReference>
<dbReference type="InterPro" id="IPR006027">
    <property type="entry name" value="NusB_RsmB_TIM44"/>
</dbReference>
<dbReference type="NCBIfam" id="TIGR01951">
    <property type="entry name" value="nusB"/>
    <property type="match status" value="1"/>
</dbReference>
<dbReference type="PANTHER" id="PTHR11078:SF3">
    <property type="entry name" value="ANTITERMINATION NUSB DOMAIN-CONTAINING PROTEIN"/>
    <property type="match status" value="1"/>
</dbReference>
<dbReference type="PANTHER" id="PTHR11078">
    <property type="entry name" value="N UTILIZATION SUBSTANCE PROTEIN B-RELATED"/>
    <property type="match status" value="1"/>
</dbReference>
<dbReference type="Pfam" id="PF01029">
    <property type="entry name" value="NusB"/>
    <property type="match status" value="1"/>
</dbReference>
<dbReference type="SUPFAM" id="SSF48013">
    <property type="entry name" value="NusB-like"/>
    <property type="match status" value="1"/>
</dbReference>
<sequence>MPDRKGDRGRHQARKRAVDLLFEAEARGITAAEVAEARNALAEKRTDDIATLNPYTVTVAQGVTAHAAHIDDLISAHLQGWTLDRLPAVDRAILRVAVWELLHAEDVPEPVAVDEAVELAKQLSTDDSPGFVNGVLGQVMLVTPQIRAAAAAMQGGHNGGSGT</sequence>
<evidence type="ECO:0000255" key="1">
    <source>
        <dbReference type="HAMAP-Rule" id="MF_00073"/>
    </source>
</evidence>
<reference key="1">
    <citation type="submission" date="2006-12" db="EMBL/GenBank/DDBJ databases">
        <title>Complete sequence of Mycobacterium vanbaalenii PYR-1.</title>
        <authorList>
            <consortium name="US DOE Joint Genome Institute"/>
            <person name="Copeland A."/>
            <person name="Lucas S."/>
            <person name="Lapidus A."/>
            <person name="Barry K."/>
            <person name="Detter J.C."/>
            <person name="Glavina del Rio T."/>
            <person name="Hammon N."/>
            <person name="Israni S."/>
            <person name="Dalin E."/>
            <person name="Tice H."/>
            <person name="Pitluck S."/>
            <person name="Singan V."/>
            <person name="Schmutz J."/>
            <person name="Larimer F."/>
            <person name="Land M."/>
            <person name="Hauser L."/>
            <person name="Kyrpides N."/>
            <person name="Anderson I.J."/>
            <person name="Miller C."/>
            <person name="Richardson P."/>
        </authorList>
    </citation>
    <scope>NUCLEOTIDE SEQUENCE [LARGE SCALE GENOMIC DNA]</scope>
    <source>
        <strain>DSM 7251 / JCM 13017 / BCRC 16820 / KCTC 9966 / NRRL B-24157 / PYR-1</strain>
    </source>
</reference>
<keyword id="KW-0694">RNA-binding</keyword>
<keyword id="KW-0804">Transcription</keyword>
<keyword id="KW-0889">Transcription antitermination</keyword>
<keyword id="KW-0805">Transcription regulation</keyword>
<feature type="chain" id="PRO_1000023753" description="Transcription antitermination protein NusB">
    <location>
        <begin position="1"/>
        <end position="163"/>
    </location>
</feature>
<proteinExistence type="inferred from homology"/>
<gene>
    <name evidence="1" type="primary">nusB</name>
    <name type="ordered locus">Mvan_2652</name>
</gene>